<dbReference type="EC" id="2.1.1.-" evidence="7"/>
<dbReference type="EMBL" id="CH445337">
    <property type="protein sequence ID" value="EAT83778.1"/>
    <property type="molecule type" value="Genomic_DNA"/>
</dbReference>
<dbReference type="RefSeq" id="XP_001798919.1">
    <property type="nucleotide sequence ID" value="XM_001798867.1"/>
</dbReference>
<dbReference type="SMR" id="Q0UI04"/>
<dbReference type="STRING" id="321614.Q0UI04"/>
<dbReference type="EnsemblFungi" id="SNOT_08610">
    <property type="protein sequence ID" value="SNOT_08610"/>
    <property type="gene ID" value="SNOG_08610"/>
</dbReference>
<dbReference type="GeneID" id="5975818"/>
<dbReference type="KEGG" id="pno:SNOG_08610"/>
<dbReference type="VEuPathDB" id="FungiDB:JI435_086100"/>
<dbReference type="eggNOG" id="KOG3178">
    <property type="taxonomic scope" value="Eukaryota"/>
</dbReference>
<dbReference type="HOGENOM" id="CLU_005533_1_4_1"/>
<dbReference type="InParanoid" id="Q0UI04"/>
<dbReference type="OMA" id="HVSMAIV"/>
<dbReference type="OrthoDB" id="2410195at2759"/>
<dbReference type="Proteomes" id="UP000001055">
    <property type="component" value="Unassembled WGS sequence"/>
</dbReference>
<dbReference type="GO" id="GO:0008171">
    <property type="term" value="F:O-methyltransferase activity"/>
    <property type="evidence" value="ECO:0007669"/>
    <property type="project" value="InterPro"/>
</dbReference>
<dbReference type="GO" id="GO:0032259">
    <property type="term" value="P:methylation"/>
    <property type="evidence" value="ECO:0007669"/>
    <property type="project" value="UniProtKB-KW"/>
</dbReference>
<dbReference type="GO" id="GO:0044550">
    <property type="term" value="P:secondary metabolite biosynthetic process"/>
    <property type="evidence" value="ECO:0007669"/>
    <property type="project" value="UniProtKB-ARBA"/>
</dbReference>
<dbReference type="Gene3D" id="3.40.50.150">
    <property type="entry name" value="Vaccinia Virus protein VP39"/>
    <property type="match status" value="1"/>
</dbReference>
<dbReference type="Gene3D" id="1.10.10.10">
    <property type="entry name" value="Winged helix-like DNA-binding domain superfamily/Winged helix DNA-binding domain"/>
    <property type="match status" value="1"/>
</dbReference>
<dbReference type="InterPro" id="IPR016461">
    <property type="entry name" value="COMT-like"/>
</dbReference>
<dbReference type="InterPro" id="IPR001077">
    <property type="entry name" value="O_MeTrfase_dom"/>
</dbReference>
<dbReference type="InterPro" id="IPR029063">
    <property type="entry name" value="SAM-dependent_MTases_sf"/>
</dbReference>
<dbReference type="InterPro" id="IPR036388">
    <property type="entry name" value="WH-like_DNA-bd_sf"/>
</dbReference>
<dbReference type="InterPro" id="IPR036390">
    <property type="entry name" value="WH_DNA-bd_sf"/>
</dbReference>
<dbReference type="PANTHER" id="PTHR43712:SF16">
    <property type="entry name" value="O-METHYLTRANSFERASE ELCB"/>
    <property type="match status" value="1"/>
</dbReference>
<dbReference type="PANTHER" id="PTHR43712">
    <property type="entry name" value="PUTATIVE (AFU_ORTHOLOGUE AFUA_4G14580)-RELATED"/>
    <property type="match status" value="1"/>
</dbReference>
<dbReference type="Pfam" id="PF00891">
    <property type="entry name" value="Methyltransf_2"/>
    <property type="match status" value="1"/>
</dbReference>
<dbReference type="SUPFAM" id="SSF53335">
    <property type="entry name" value="S-adenosyl-L-methionine-dependent methyltransferases"/>
    <property type="match status" value="1"/>
</dbReference>
<dbReference type="SUPFAM" id="SSF46785">
    <property type="entry name" value="Winged helix' DNA-binding domain"/>
    <property type="match status" value="1"/>
</dbReference>
<dbReference type="PROSITE" id="PS51683">
    <property type="entry name" value="SAM_OMT_II"/>
    <property type="match status" value="1"/>
</dbReference>
<reference key="1">
    <citation type="journal article" date="2007" name="Plant Cell">
        <title>Dothideomycete-plant interactions illuminated by genome sequencing and EST analysis of the wheat pathogen Stagonospora nodorum.</title>
        <authorList>
            <person name="Hane J.K."/>
            <person name="Lowe R.G.T."/>
            <person name="Solomon P.S."/>
            <person name="Tan K.-C."/>
            <person name="Schoch C.L."/>
            <person name="Spatafora J.W."/>
            <person name="Crous P.W."/>
            <person name="Kodira C.D."/>
            <person name="Birren B.W."/>
            <person name="Galagan J.E."/>
            <person name="Torriani S.F.F."/>
            <person name="McDonald B.A."/>
            <person name="Oliver R.P."/>
        </authorList>
    </citation>
    <scope>NUCLEOTIDE SEQUENCE [LARGE SCALE GENOMIC DNA]</scope>
    <source>
        <strain>SN15 / ATCC MYA-4574 / FGSC 10173</strain>
    </source>
</reference>
<reference key="2">
    <citation type="journal article" date="2017" name="Environ. Microbiol.">
        <title>Functional genomics-guided discovery of a light-activated phytotoxin in the wheat pathogen Parastagonospora nodorum via pathway activation.</title>
        <authorList>
            <person name="Chooi Y.H."/>
            <person name="Zhang G."/>
            <person name="Hu J."/>
            <person name="Muria-Gonzalez M.J."/>
            <person name="Tran P.N."/>
            <person name="Pettitt A."/>
            <person name="Maier A.G."/>
            <person name="Barrow R.A."/>
            <person name="Solomon P.S."/>
        </authorList>
    </citation>
    <scope>INDUCTION</scope>
    <scope>FUNCTION</scope>
    <scope>PATHWAY</scope>
</reference>
<reference key="3">
    <citation type="journal article" date="2019" name="Chem. Sci.">
        <title>Heterologous biosynthesis of elsinochrome A sheds light on the formation of the photosensitive perylenequinone system.</title>
        <authorList>
            <person name="Hu J."/>
            <person name="Sarrami F."/>
            <person name="Li H."/>
            <person name="Zhang G."/>
            <person name="Stubbs K.A."/>
            <person name="Lacey E."/>
            <person name="Stewart S.G."/>
            <person name="Karton A."/>
            <person name="Piggott A.M."/>
            <person name="Chooi Y.H."/>
        </authorList>
    </citation>
    <scope>FUNCTION</scope>
    <scope>CATALYTIC ACTIVITY</scope>
    <scope>PATHWAY</scope>
</reference>
<comment type="function">
    <text evidence="1 3 4 8">O-methyltransferase; part of the gene cluster that mediates the biosynthesis of elsinochrome C, a perelyenequinone phytotoxin structurally similar to cercosporin (PubMed:28251756, PubMed:30809363). The first step of elsinochrome C biosynthesis is performed by the polyketide synthase elcA which catalyzes the formation of nor-toralactone (PubMed:28251756, PubMed:30809363). The starter unit acyltransferase (SAT) domain of elcA initiates polyketide extension by the selective utilization of acetyl-CoA, which is elongated to the heptaketide in the beta-ketoacyl synthase (KS) domain by successive condensations with six malonyl units introduced by the malonyl acyltransferase (MAT) domain (By similarity). The product template (PT) domain catalyzes C4-C9 and C2-C11 aldol cyclizations and dehydrations to a trihydroxynaphthalene, which is thought to be delivered to the thioesterase (TE) domain for product release (By similarity). The bifunctional enzyme elcB then methylates nor-toralactone to toralactone before conducting an unusual oxidative aromatic ring opening (PubMed:28251756, PubMed:30809363). The next step in perylenequinone biosynthesis is an O-methylation at the nascent OH-6 of the elcB product performed by the O-methyltransferase elcD (PubMed:30809363). The oxidative coupling of the two monomeric naphthol units in perylenequinone biosynthesis is catalyzed by the FAD-dependent monooxygenase elcE and the multicopper oxidase elcG (PubMed:30809363). ElcG might catalyze the first intermolecular coupling in a regio- and stereo-selective manner via a phenol radical coupling mechanism and the elcE could forge the second C-C bond intramolecularly via a hydride transfer mechanism (PubMed:30809363). The fasciclin domain-containing protein elcF might also play a role duting this step (Probable). The last piece of the puzzle in the biosynthesis of elsinochrome C is the additional annulation by enolate coupling to afford the dihydrobenzo(ghi)perylenequinone system, catalyzed by the FAD-dependent monooxygenase elcH (PubMed:30809363).</text>
</comment>
<comment type="pathway">
    <text evidence="3 4">Secondary metabolite biosynthesis.</text>
</comment>
<comment type="induction">
    <text evidence="3">Expression is up-regulated during the late stage of P.nodorum wheat leaf infection and is controlled by the cluster specific transporter elcR.</text>
</comment>
<comment type="similarity">
    <text evidence="6">Belongs to the class I-like SAM-binding methyltransferase superfamily. Cation-independent O-methyltransferase family. COMT subfamily.</text>
</comment>
<sequence>MSLLQLTASITKAAADLDDATNNAAKASEIESKAKTALLDAAERLVLAYRSPRQWLIDLSFQHCATASLQMIMKYRLHHAVPKQGSRSFAEIAEIITTPDQPGKLPESLVGRLLQHAMSFGLFTPAASGRVAHNDASLLLVTDPDLEAWVYLCSNVAYPAGAQLPKAIEQYGASSEPSETAYSVSIGRRISQFERFREPDGHAEHEMFARAMKGISAGGAYDVGHVVDGGYPWHELPEGTLVVDVGGGPGHVAIALARKYPQLLFEVQDLVETVEFGAKNCPKDLQHRVSFRAQDFFKPQPQRETDSRTIVYFARFILHDWSDKYAGQIVEPLAQAMRPQDRLILNEVVVPEPSVEQRIERKSHDRDLLMLMNLNGRERTLVAFEGLFEVVSPRLRVEKVHKPTTGGELSLITASVDKLTGRKSAGGDIFGANVDEA</sequence>
<evidence type="ECO:0000250" key="1">
    <source>
        <dbReference type="UniProtKB" id="Q6DQW3"/>
    </source>
</evidence>
<evidence type="ECO:0000255" key="2">
    <source>
        <dbReference type="PROSITE-ProRule" id="PRU01020"/>
    </source>
</evidence>
<evidence type="ECO:0000269" key="3">
    <source>
    </source>
</evidence>
<evidence type="ECO:0000269" key="4">
    <source>
    </source>
</evidence>
<evidence type="ECO:0000303" key="5">
    <source>
    </source>
</evidence>
<evidence type="ECO:0000305" key="6"/>
<evidence type="ECO:0000305" key="7">
    <source>
    </source>
</evidence>
<evidence type="ECO:0000305" key="8">
    <source>
    </source>
</evidence>
<protein>
    <recommendedName>
        <fullName evidence="5">O-methyltransferase elcB</fullName>
        <ecNumber evidence="7">2.1.1.-</ecNumber>
    </recommendedName>
    <alternativeName>
        <fullName evidence="5">Elsinochrome C biosynthesis cluster protein D</fullName>
    </alternativeName>
</protein>
<keyword id="KW-0489">Methyltransferase</keyword>
<keyword id="KW-0949">S-adenosyl-L-methionine</keyword>
<keyword id="KW-0808">Transferase</keyword>
<accession>Q0UI04</accession>
<organism>
    <name type="scientific">Phaeosphaeria nodorum (strain SN15 / ATCC MYA-4574 / FGSC 10173)</name>
    <name type="common">Glume blotch fungus</name>
    <name type="synonym">Parastagonospora nodorum</name>
    <dbReference type="NCBI Taxonomy" id="321614"/>
    <lineage>
        <taxon>Eukaryota</taxon>
        <taxon>Fungi</taxon>
        <taxon>Dikarya</taxon>
        <taxon>Ascomycota</taxon>
        <taxon>Pezizomycotina</taxon>
        <taxon>Dothideomycetes</taxon>
        <taxon>Pleosporomycetidae</taxon>
        <taxon>Pleosporales</taxon>
        <taxon>Pleosporineae</taxon>
        <taxon>Phaeosphaeriaceae</taxon>
        <taxon>Parastagonospora</taxon>
    </lineage>
</organism>
<gene>
    <name evidence="5" type="primary">elcD</name>
    <name type="ORF">SNOG_08610</name>
</gene>
<proteinExistence type="evidence at protein level"/>
<name>ELCD_PHANO</name>
<feature type="chain" id="PRO_0000449855" description="O-methyltransferase elcB">
    <location>
        <begin position="1"/>
        <end position="437"/>
    </location>
</feature>
<feature type="active site" description="Proton acceptor" evidence="2">
    <location>
        <position position="319"/>
    </location>
</feature>
<feature type="binding site" evidence="2">
    <location>
        <position position="269"/>
    </location>
    <ligand>
        <name>S-adenosyl-L-methionine</name>
        <dbReference type="ChEBI" id="CHEBI:59789"/>
    </ligand>
</feature>